<name>GYAR_THEGJ</name>
<feature type="chain" id="PRO_1000212917" description="Glyoxylate reductase">
    <location>
        <begin position="1"/>
        <end position="334"/>
    </location>
</feature>
<feature type="active site" evidence="1">
    <location>
        <position position="241"/>
    </location>
</feature>
<feature type="active site" evidence="1">
    <location>
        <position position="270"/>
    </location>
</feature>
<feature type="active site" description="Proton donor" evidence="1">
    <location>
        <position position="288"/>
    </location>
</feature>
<feature type="binding site" evidence="1">
    <location>
        <begin position="158"/>
        <end position="161"/>
    </location>
    <ligand>
        <name>NADP(+)</name>
        <dbReference type="ChEBI" id="CHEBI:58349"/>
    </ligand>
</feature>
<feature type="binding site" evidence="1">
    <location>
        <begin position="180"/>
        <end position="182"/>
    </location>
    <ligand>
        <name>NADP(+)</name>
        <dbReference type="ChEBI" id="CHEBI:58349"/>
    </ligand>
</feature>
<feature type="binding site" evidence="1">
    <location>
        <begin position="239"/>
        <end position="241"/>
    </location>
    <ligand>
        <name>NADP(+)</name>
        <dbReference type="ChEBI" id="CHEBI:58349"/>
    </ligand>
</feature>
<feature type="binding site" evidence="1">
    <location>
        <begin position="288"/>
        <end position="290"/>
    </location>
    <ligand>
        <name>NADP(+)</name>
        <dbReference type="ChEBI" id="CHEBI:58349"/>
    </ligand>
</feature>
<evidence type="ECO:0000255" key="1">
    <source>
        <dbReference type="HAMAP-Rule" id="MF_00776"/>
    </source>
</evidence>
<sequence length="334" mass="37740">MKPKVFITRAIPENGIDMLREHFEVEVWPEEREIPREVLLEKVRDVDALVTMLSERIDGEVFDNAPRLRIVANYAVGYDNVDVEEATRRGIYVTNTPDVLTNATADFAWTLLLATARRLIEADSFTRSGEWKRKGIAWHPLMFLGHDVYGKTIGIIGFGRIGQAVARRAKGFGMRILYYSRTRKPEAEEELKAEFKPLEELLKESDFVVLAVPLTKETYHMIGERELKLMKPTAILVNIARGKVVDTEALIKALKEGWIAGAGLDVFEEEPYYNEELFSLKNVILAPHIGSATFGAREGMAELVARNLIAFKNGEVPPTLVNKEVVKVKKPGFR</sequence>
<organism>
    <name type="scientific">Thermococcus gammatolerans (strain DSM 15229 / JCM 11827 / EJ3)</name>
    <dbReference type="NCBI Taxonomy" id="593117"/>
    <lineage>
        <taxon>Archaea</taxon>
        <taxon>Methanobacteriati</taxon>
        <taxon>Methanobacteriota</taxon>
        <taxon>Thermococci</taxon>
        <taxon>Thermococcales</taxon>
        <taxon>Thermococcaceae</taxon>
        <taxon>Thermococcus</taxon>
    </lineage>
</organism>
<dbReference type="EC" id="1.1.1.26" evidence="1"/>
<dbReference type="EMBL" id="CP001398">
    <property type="protein sequence ID" value="ACS34369.1"/>
    <property type="molecule type" value="Genomic_DNA"/>
</dbReference>
<dbReference type="RefSeq" id="WP_015859478.1">
    <property type="nucleotide sequence ID" value="NC_012804.1"/>
</dbReference>
<dbReference type="SMR" id="C5A1V0"/>
<dbReference type="STRING" id="593117.TGAM_1867"/>
<dbReference type="PaxDb" id="593117-TGAM_1867"/>
<dbReference type="GeneID" id="7988271"/>
<dbReference type="KEGG" id="tga:TGAM_1867"/>
<dbReference type="PATRIC" id="fig|593117.10.peg.1876"/>
<dbReference type="eggNOG" id="arCOG01755">
    <property type="taxonomic scope" value="Archaea"/>
</dbReference>
<dbReference type="HOGENOM" id="CLU_019796_1_2_2"/>
<dbReference type="OrthoDB" id="34275at2157"/>
<dbReference type="Proteomes" id="UP000001488">
    <property type="component" value="Chromosome"/>
</dbReference>
<dbReference type="GO" id="GO:0005829">
    <property type="term" value="C:cytosol"/>
    <property type="evidence" value="ECO:0007669"/>
    <property type="project" value="TreeGrafter"/>
</dbReference>
<dbReference type="GO" id="GO:0047964">
    <property type="term" value="F:glyoxylate reductase (NADH) activity"/>
    <property type="evidence" value="ECO:0007669"/>
    <property type="project" value="UniProtKB-UniRule"/>
</dbReference>
<dbReference type="GO" id="GO:0030267">
    <property type="term" value="F:glyoxylate reductase (NADPH) activity"/>
    <property type="evidence" value="ECO:0007669"/>
    <property type="project" value="TreeGrafter"/>
</dbReference>
<dbReference type="GO" id="GO:0016618">
    <property type="term" value="F:hydroxypyruvate reductase [NAD(P)H] activity"/>
    <property type="evidence" value="ECO:0007669"/>
    <property type="project" value="TreeGrafter"/>
</dbReference>
<dbReference type="GO" id="GO:0051287">
    <property type="term" value="F:NAD binding"/>
    <property type="evidence" value="ECO:0007669"/>
    <property type="project" value="InterPro"/>
</dbReference>
<dbReference type="CDD" id="cd05301">
    <property type="entry name" value="GDH"/>
    <property type="match status" value="1"/>
</dbReference>
<dbReference type="FunFam" id="3.40.50.720:FF:000462">
    <property type="entry name" value="Glyoxylate reductase (NADP+)"/>
    <property type="match status" value="1"/>
</dbReference>
<dbReference type="Gene3D" id="3.40.50.720">
    <property type="entry name" value="NAD(P)-binding Rossmann-like Domain"/>
    <property type="match status" value="2"/>
</dbReference>
<dbReference type="HAMAP" id="MF_00776">
    <property type="entry name" value="GyaR"/>
    <property type="match status" value="1"/>
</dbReference>
<dbReference type="InterPro" id="IPR015878">
    <property type="entry name" value="Ado_hCys_hydrolase_NAD-bd"/>
</dbReference>
<dbReference type="InterPro" id="IPR050223">
    <property type="entry name" value="D-isomer_2-hydroxyacid_DH"/>
</dbReference>
<dbReference type="InterPro" id="IPR006139">
    <property type="entry name" value="D-isomer_2_OHA_DH_cat_dom"/>
</dbReference>
<dbReference type="InterPro" id="IPR029753">
    <property type="entry name" value="D-isomer_DH_CS"/>
</dbReference>
<dbReference type="InterPro" id="IPR029752">
    <property type="entry name" value="D-isomer_DH_CS1"/>
</dbReference>
<dbReference type="InterPro" id="IPR006140">
    <property type="entry name" value="D-isomer_DH_NAD-bd"/>
</dbReference>
<dbReference type="InterPro" id="IPR023519">
    <property type="entry name" value="Glyoxylate_reductase_GyaR"/>
</dbReference>
<dbReference type="InterPro" id="IPR036291">
    <property type="entry name" value="NAD(P)-bd_dom_sf"/>
</dbReference>
<dbReference type="NCBIfam" id="NF009714">
    <property type="entry name" value="PRK13243.1"/>
    <property type="match status" value="1"/>
</dbReference>
<dbReference type="PANTHER" id="PTHR10996">
    <property type="entry name" value="2-HYDROXYACID DEHYDROGENASE-RELATED"/>
    <property type="match status" value="1"/>
</dbReference>
<dbReference type="PANTHER" id="PTHR10996:SF283">
    <property type="entry name" value="GLYOXYLATE_HYDROXYPYRUVATE REDUCTASE B"/>
    <property type="match status" value="1"/>
</dbReference>
<dbReference type="Pfam" id="PF00389">
    <property type="entry name" value="2-Hacid_dh"/>
    <property type="match status" value="1"/>
</dbReference>
<dbReference type="Pfam" id="PF02826">
    <property type="entry name" value="2-Hacid_dh_C"/>
    <property type="match status" value="1"/>
</dbReference>
<dbReference type="SMART" id="SM00997">
    <property type="entry name" value="AdoHcyase_NAD"/>
    <property type="match status" value="1"/>
</dbReference>
<dbReference type="SUPFAM" id="SSF52283">
    <property type="entry name" value="Formate/glycerate dehydrogenase catalytic domain-like"/>
    <property type="match status" value="1"/>
</dbReference>
<dbReference type="SUPFAM" id="SSF51735">
    <property type="entry name" value="NAD(P)-binding Rossmann-fold domains"/>
    <property type="match status" value="1"/>
</dbReference>
<dbReference type="PROSITE" id="PS00065">
    <property type="entry name" value="D_2_HYDROXYACID_DH_1"/>
    <property type="match status" value="1"/>
</dbReference>
<dbReference type="PROSITE" id="PS00671">
    <property type="entry name" value="D_2_HYDROXYACID_DH_3"/>
    <property type="match status" value="1"/>
</dbReference>
<gene>
    <name evidence="1" type="primary">gyaR</name>
    <name type="ordered locus">TGAM_1867</name>
</gene>
<protein>
    <recommendedName>
        <fullName evidence="1">Glyoxylate reductase</fullName>
        <ecNumber evidence="1">1.1.1.26</ecNumber>
    </recommendedName>
</protein>
<accession>C5A1V0</accession>
<comment type="catalytic activity">
    <reaction evidence="1">
        <text>glycolate + NAD(+) = glyoxylate + NADH + H(+)</text>
        <dbReference type="Rhea" id="RHEA:18229"/>
        <dbReference type="ChEBI" id="CHEBI:15378"/>
        <dbReference type="ChEBI" id="CHEBI:29805"/>
        <dbReference type="ChEBI" id="CHEBI:36655"/>
        <dbReference type="ChEBI" id="CHEBI:57540"/>
        <dbReference type="ChEBI" id="CHEBI:57945"/>
        <dbReference type="EC" id="1.1.1.26"/>
    </reaction>
</comment>
<comment type="subunit">
    <text evidence="1">Homodimer.</text>
</comment>
<comment type="subcellular location">
    <subcellularLocation>
        <location evidence="1">Cytoplasm</location>
    </subcellularLocation>
</comment>
<comment type="similarity">
    <text evidence="1">Belongs to the D-isomer specific 2-hydroxyacid dehydrogenase family. GyaR subfamily.</text>
</comment>
<keyword id="KW-0963">Cytoplasm</keyword>
<keyword id="KW-0520">NAD</keyword>
<keyword id="KW-0560">Oxidoreductase</keyword>
<keyword id="KW-1185">Reference proteome</keyword>
<reference key="1">
    <citation type="journal article" date="2007" name="Genome Biol.">
        <title>Genome analysis and genome-wide proteomics of Thermococcus gammatolerans, the most radioresistant organism known amongst the Archaea.</title>
        <authorList>
            <person name="Zivanovic Y."/>
            <person name="Armengaud J."/>
            <person name="Lagorce A."/>
            <person name="Leplat C."/>
            <person name="Guerin P."/>
            <person name="Dutertre M."/>
            <person name="Anthouard V."/>
            <person name="Forterre P."/>
            <person name="Wincker P."/>
            <person name="Confalonieri F."/>
        </authorList>
    </citation>
    <scope>NUCLEOTIDE SEQUENCE [LARGE SCALE GENOMIC DNA]</scope>
    <source>
        <strain>DSM 15229 / JCM 11827 / EJ3</strain>
    </source>
</reference>
<proteinExistence type="inferred from homology"/>